<gene>
    <name evidence="1" type="primary">rpsQ</name>
    <name type="ordered locus">H16_A3475</name>
</gene>
<organism>
    <name type="scientific">Cupriavidus necator (strain ATCC 17699 / DSM 428 / KCTC 22496 / NCIMB 10442 / H16 / Stanier 337)</name>
    <name type="common">Ralstonia eutropha</name>
    <dbReference type="NCBI Taxonomy" id="381666"/>
    <lineage>
        <taxon>Bacteria</taxon>
        <taxon>Pseudomonadati</taxon>
        <taxon>Pseudomonadota</taxon>
        <taxon>Betaproteobacteria</taxon>
        <taxon>Burkholderiales</taxon>
        <taxon>Burkholderiaceae</taxon>
        <taxon>Cupriavidus</taxon>
    </lineage>
</organism>
<proteinExistence type="inferred from homology"/>
<feature type="chain" id="PRO_1000055004" description="Small ribosomal subunit protein uS17">
    <location>
        <begin position="1"/>
        <end position="92"/>
    </location>
</feature>
<dbReference type="EMBL" id="AM260479">
    <property type="protein sequence ID" value="CAJ94543.1"/>
    <property type="molecule type" value="Genomic_DNA"/>
</dbReference>
<dbReference type="RefSeq" id="WP_010812389.1">
    <property type="nucleotide sequence ID" value="NZ_CP039287.1"/>
</dbReference>
<dbReference type="SMR" id="Q0K628"/>
<dbReference type="STRING" id="381666.H16_A3475"/>
<dbReference type="GeneID" id="34309278"/>
<dbReference type="KEGG" id="reh:H16_A3475"/>
<dbReference type="eggNOG" id="COG0186">
    <property type="taxonomic scope" value="Bacteria"/>
</dbReference>
<dbReference type="HOGENOM" id="CLU_073626_1_1_4"/>
<dbReference type="OrthoDB" id="9811714at2"/>
<dbReference type="Proteomes" id="UP000008210">
    <property type="component" value="Chromosome 1"/>
</dbReference>
<dbReference type="GO" id="GO:0022627">
    <property type="term" value="C:cytosolic small ribosomal subunit"/>
    <property type="evidence" value="ECO:0007669"/>
    <property type="project" value="TreeGrafter"/>
</dbReference>
<dbReference type="GO" id="GO:0019843">
    <property type="term" value="F:rRNA binding"/>
    <property type="evidence" value="ECO:0007669"/>
    <property type="project" value="UniProtKB-UniRule"/>
</dbReference>
<dbReference type="GO" id="GO:0003735">
    <property type="term" value="F:structural constituent of ribosome"/>
    <property type="evidence" value="ECO:0007669"/>
    <property type="project" value="InterPro"/>
</dbReference>
<dbReference type="GO" id="GO:0006412">
    <property type="term" value="P:translation"/>
    <property type="evidence" value="ECO:0007669"/>
    <property type="project" value="UniProtKB-UniRule"/>
</dbReference>
<dbReference type="CDD" id="cd00364">
    <property type="entry name" value="Ribosomal_uS17"/>
    <property type="match status" value="1"/>
</dbReference>
<dbReference type="Gene3D" id="2.40.50.140">
    <property type="entry name" value="Nucleic acid-binding proteins"/>
    <property type="match status" value="1"/>
</dbReference>
<dbReference type="HAMAP" id="MF_01345_B">
    <property type="entry name" value="Ribosomal_uS17_B"/>
    <property type="match status" value="1"/>
</dbReference>
<dbReference type="InterPro" id="IPR012340">
    <property type="entry name" value="NA-bd_OB-fold"/>
</dbReference>
<dbReference type="InterPro" id="IPR000266">
    <property type="entry name" value="Ribosomal_uS17"/>
</dbReference>
<dbReference type="InterPro" id="IPR019984">
    <property type="entry name" value="Ribosomal_uS17_bact/chlr"/>
</dbReference>
<dbReference type="InterPro" id="IPR019979">
    <property type="entry name" value="Ribosomal_uS17_CS"/>
</dbReference>
<dbReference type="NCBIfam" id="NF004123">
    <property type="entry name" value="PRK05610.1"/>
    <property type="match status" value="1"/>
</dbReference>
<dbReference type="NCBIfam" id="TIGR03635">
    <property type="entry name" value="uS17_bact"/>
    <property type="match status" value="1"/>
</dbReference>
<dbReference type="PANTHER" id="PTHR10744">
    <property type="entry name" value="40S RIBOSOMAL PROTEIN S11 FAMILY MEMBER"/>
    <property type="match status" value="1"/>
</dbReference>
<dbReference type="PANTHER" id="PTHR10744:SF1">
    <property type="entry name" value="SMALL RIBOSOMAL SUBUNIT PROTEIN US17M"/>
    <property type="match status" value="1"/>
</dbReference>
<dbReference type="Pfam" id="PF00366">
    <property type="entry name" value="Ribosomal_S17"/>
    <property type="match status" value="1"/>
</dbReference>
<dbReference type="PRINTS" id="PR00973">
    <property type="entry name" value="RIBOSOMALS17"/>
</dbReference>
<dbReference type="SUPFAM" id="SSF50249">
    <property type="entry name" value="Nucleic acid-binding proteins"/>
    <property type="match status" value="1"/>
</dbReference>
<dbReference type="PROSITE" id="PS00056">
    <property type="entry name" value="RIBOSOMAL_S17"/>
    <property type="match status" value="1"/>
</dbReference>
<reference key="1">
    <citation type="journal article" date="2006" name="Nat. Biotechnol.">
        <title>Genome sequence of the bioplastic-producing 'Knallgas' bacterium Ralstonia eutropha H16.</title>
        <authorList>
            <person name="Pohlmann A."/>
            <person name="Fricke W.F."/>
            <person name="Reinecke F."/>
            <person name="Kusian B."/>
            <person name="Liesegang H."/>
            <person name="Cramm R."/>
            <person name="Eitinger T."/>
            <person name="Ewering C."/>
            <person name="Poetter M."/>
            <person name="Schwartz E."/>
            <person name="Strittmatter A."/>
            <person name="Voss I."/>
            <person name="Gottschalk G."/>
            <person name="Steinbuechel A."/>
            <person name="Friedrich B."/>
            <person name="Bowien B."/>
        </authorList>
    </citation>
    <scope>NUCLEOTIDE SEQUENCE [LARGE SCALE GENOMIC DNA]</scope>
    <source>
        <strain>ATCC 17699 / DSM 428 / KCTC 22496 / NCIMB 10442 / H16 / Stanier 337</strain>
    </source>
</reference>
<keyword id="KW-1185">Reference proteome</keyword>
<keyword id="KW-0687">Ribonucleoprotein</keyword>
<keyword id="KW-0689">Ribosomal protein</keyword>
<keyword id="KW-0694">RNA-binding</keyword>
<keyword id="KW-0699">rRNA-binding</keyword>
<evidence type="ECO:0000255" key="1">
    <source>
        <dbReference type="HAMAP-Rule" id="MF_01345"/>
    </source>
</evidence>
<evidence type="ECO:0000305" key="2"/>
<protein>
    <recommendedName>
        <fullName evidence="1">Small ribosomal subunit protein uS17</fullName>
    </recommendedName>
    <alternativeName>
        <fullName evidence="2">30S ribosomal protein S17</fullName>
    </alternativeName>
</protein>
<comment type="function">
    <text evidence="1">One of the primary rRNA binding proteins, it binds specifically to the 5'-end of 16S ribosomal RNA.</text>
</comment>
<comment type="subunit">
    <text evidence="1">Part of the 30S ribosomal subunit.</text>
</comment>
<comment type="similarity">
    <text evidence="1">Belongs to the universal ribosomal protein uS17 family.</text>
</comment>
<name>RS17_CUPNH</name>
<sequence length="92" mass="10609">MTEAAQTEKSLRRTLVGRVVSDKMDKTVTVLVENRVKHPLYGKYVLRSKKYHAHDEANQYKEGDKVEIQEGRPLSRTKSWVVSRLVEAARVI</sequence>
<accession>Q0K628</accession>